<feature type="chain" id="PRO_0000148004" description="Phosphoglucosamine mutase">
    <location>
        <begin position="1"/>
        <end position="449"/>
    </location>
</feature>
<feature type="active site" description="Phosphoserine intermediate" evidence="1">
    <location>
        <position position="104"/>
    </location>
</feature>
<feature type="binding site" description="via phosphate group" evidence="1">
    <location>
        <position position="104"/>
    </location>
    <ligand>
        <name>Mg(2+)</name>
        <dbReference type="ChEBI" id="CHEBI:18420"/>
    </ligand>
</feature>
<feature type="binding site" evidence="1">
    <location>
        <position position="243"/>
    </location>
    <ligand>
        <name>Mg(2+)</name>
        <dbReference type="ChEBI" id="CHEBI:18420"/>
    </ligand>
</feature>
<feature type="binding site" evidence="1">
    <location>
        <position position="245"/>
    </location>
    <ligand>
        <name>Mg(2+)</name>
        <dbReference type="ChEBI" id="CHEBI:18420"/>
    </ligand>
</feature>
<feature type="binding site" evidence="1">
    <location>
        <position position="247"/>
    </location>
    <ligand>
        <name>Mg(2+)</name>
        <dbReference type="ChEBI" id="CHEBI:18420"/>
    </ligand>
</feature>
<feature type="modified residue" description="Phosphoserine" evidence="1">
    <location>
        <position position="104"/>
    </location>
</feature>
<comment type="function">
    <text evidence="1">Catalyzes the conversion of glucosamine-6-phosphate to glucosamine-1-phosphate.</text>
</comment>
<comment type="catalytic activity">
    <reaction evidence="1">
        <text>alpha-D-glucosamine 1-phosphate = D-glucosamine 6-phosphate</text>
        <dbReference type="Rhea" id="RHEA:23424"/>
        <dbReference type="ChEBI" id="CHEBI:58516"/>
        <dbReference type="ChEBI" id="CHEBI:58725"/>
        <dbReference type="EC" id="5.4.2.10"/>
    </reaction>
</comment>
<comment type="cofactor">
    <cofactor evidence="1">
        <name>Mg(2+)</name>
        <dbReference type="ChEBI" id="CHEBI:18420"/>
    </cofactor>
    <text evidence="1">Binds 1 Mg(2+) ion per subunit.</text>
</comment>
<comment type="PTM">
    <text evidence="1">Activated by phosphorylation.</text>
</comment>
<comment type="similarity">
    <text evidence="1">Belongs to the phosphohexose mutase family.</text>
</comment>
<accession>Q8P7S2</accession>
<sequence>MSSRKYFGTDGIRGRVGQGVISADFVLRLGNALGRVLTAGRSKRPLVLIGKDTRISGYMFEAALEAGLVAAGADVQLIGPMPTPAIAFLTSTLRADAGVVISASHNPHYDNGIKFFSAEGEKLDDATEAAIEAALDAPFHTVESERLGKAIRTRDAIGRYIEFCKASVPRGFTLHGLKMVLDCAHGATYHIAPMLFRELGAEVVVIGAAPDGLNINDGVGSTHIDNLAAKVRETGAQLGIAFDGDGDRVLMADDQGNPVDGDDLLYVLARSWQASGRLTGTVVGTLMTNYGLEKALAALQIPFQRAKVGDRYVHQALVEGGGTLGGETSGHLLCLDRATTGDGIVSALQVLEALGRDGHSLREALSSLSKVPQQTVNVRLGGGAAKAIVEAASVQQALQQAQAAVQGRGRAFLRPSGTEPVVRVTVEADEAGLMQDTLDRLAGAVRDAA</sequence>
<proteinExistence type="inferred from homology"/>
<evidence type="ECO:0000255" key="1">
    <source>
        <dbReference type="HAMAP-Rule" id="MF_01554"/>
    </source>
</evidence>
<reference key="1">
    <citation type="journal article" date="2002" name="Nature">
        <title>Comparison of the genomes of two Xanthomonas pathogens with differing host specificities.</title>
        <authorList>
            <person name="da Silva A.C.R."/>
            <person name="Ferro J.A."/>
            <person name="Reinach F.C."/>
            <person name="Farah C.S."/>
            <person name="Furlan L.R."/>
            <person name="Quaggio R.B."/>
            <person name="Monteiro-Vitorello C.B."/>
            <person name="Van Sluys M.A."/>
            <person name="Almeida N.F. Jr."/>
            <person name="Alves L.M.C."/>
            <person name="do Amaral A.M."/>
            <person name="Bertolini M.C."/>
            <person name="Camargo L.E.A."/>
            <person name="Camarotte G."/>
            <person name="Cannavan F."/>
            <person name="Cardozo J."/>
            <person name="Chambergo F."/>
            <person name="Ciapina L.P."/>
            <person name="Cicarelli R.M.B."/>
            <person name="Coutinho L.L."/>
            <person name="Cursino-Santos J.R."/>
            <person name="El-Dorry H."/>
            <person name="Faria J.B."/>
            <person name="Ferreira A.J.S."/>
            <person name="Ferreira R.C.C."/>
            <person name="Ferro M.I.T."/>
            <person name="Formighieri E.F."/>
            <person name="Franco M.C."/>
            <person name="Greggio C.C."/>
            <person name="Gruber A."/>
            <person name="Katsuyama A.M."/>
            <person name="Kishi L.T."/>
            <person name="Leite R.P."/>
            <person name="Lemos E.G.M."/>
            <person name="Lemos M.V.F."/>
            <person name="Locali E.C."/>
            <person name="Machado M.A."/>
            <person name="Madeira A.M.B.N."/>
            <person name="Martinez-Rossi N.M."/>
            <person name="Martins E.C."/>
            <person name="Meidanis J."/>
            <person name="Menck C.F.M."/>
            <person name="Miyaki C.Y."/>
            <person name="Moon D.H."/>
            <person name="Moreira L.M."/>
            <person name="Novo M.T.M."/>
            <person name="Okura V.K."/>
            <person name="Oliveira M.C."/>
            <person name="Oliveira V.R."/>
            <person name="Pereira H.A."/>
            <person name="Rossi A."/>
            <person name="Sena J.A.D."/>
            <person name="Silva C."/>
            <person name="de Souza R.F."/>
            <person name="Spinola L.A.F."/>
            <person name="Takita M.A."/>
            <person name="Tamura R.E."/>
            <person name="Teixeira E.C."/>
            <person name="Tezza R.I.D."/>
            <person name="Trindade dos Santos M."/>
            <person name="Truffi D."/>
            <person name="Tsai S.M."/>
            <person name="White F.F."/>
            <person name="Setubal J.C."/>
            <person name="Kitajima J.P."/>
        </authorList>
    </citation>
    <scope>NUCLEOTIDE SEQUENCE [LARGE SCALE GENOMIC DNA]</scope>
    <source>
        <strain>ATCC 33913 / DSM 3586 / NCPPB 528 / LMG 568 / P 25</strain>
    </source>
</reference>
<organism>
    <name type="scientific">Xanthomonas campestris pv. campestris (strain ATCC 33913 / DSM 3586 / NCPPB 528 / LMG 568 / P 25)</name>
    <dbReference type="NCBI Taxonomy" id="190485"/>
    <lineage>
        <taxon>Bacteria</taxon>
        <taxon>Pseudomonadati</taxon>
        <taxon>Pseudomonadota</taxon>
        <taxon>Gammaproteobacteria</taxon>
        <taxon>Lysobacterales</taxon>
        <taxon>Lysobacteraceae</taxon>
        <taxon>Xanthomonas</taxon>
    </lineage>
</organism>
<protein>
    <recommendedName>
        <fullName evidence="1">Phosphoglucosamine mutase</fullName>
        <ecNumber evidence="1">5.4.2.10</ecNumber>
    </recommendedName>
</protein>
<name>GLMM_XANCP</name>
<keyword id="KW-0413">Isomerase</keyword>
<keyword id="KW-0460">Magnesium</keyword>
<keyword id="KW-0479">Metal-binding</keyword>
<keyword id="KW-0597">Phosphoprotein</keyword>
<keyword id="KW-1185">Reference proteome</keyword>
<gene>
    <name evidence="1" type="primary">glmM</name>
    <name type="ordered locus">XCC2539</name>
</gene>
<dbReference type="EC" id="5.4.2.10" evidence="1"/>
<dbReference type="EMBL" id="AE008922">
    <property type="protein sequence ID" value="AAM41811.1"/>
    <property type="molecule type" value="Genomic_DNA"/>
</dbReference>
<dbReference type="RefSeq" id="NP_637887.1">
    <property type="nucleotide sequence ID" value="NC_003902.1"/>
</dbReference>
<dbReference type="RefSeq" id="WP_011037669.1">
    <property type="nucleotide sequence ID" value="NC_003902.1"/>
</dbReference>
<dbReference type="SMR" id="Q8P7S2"/>
<dbReference type="STRING" id="190485.XCC2539"/>
<dbReference type="EnsemblBacteria" id="AAM41811">
    <property type="protein sequence ID" value="AAM41811"/>
    <property type="gene ID" value="XCC2539"/>
</dbReference>
<dbReference type="KEGG" id="xcc:XCC2539"/>
<dbReference type="PATRIC" id="fig|190485.4.peg.2704"/>
<dbReference type="eggNOG" id="COG1109">
    <property type="taxonomic scope" value="Bacteria"/>
</dbReference>
<dbReference type="HOGENOM" id="CLU_016950_7_0_6"/>
<dbReference type="OrthoDB" id="9803322at2"/>
<dbReference type="Proteomes" id="UP000001010">
    <property type="component" value="Chromosome"/>
</dbReference>
<dbReference type="GO" id="GO:0005829">
    <property type="term" value="C:cytosol"/>
    <property type="evidence" value="ECO:0000318"/>
    <property type="project" value="GO_Central"/>
</dbReference>
<dbReference type="GO" id="GO:0000287">
    <property type="term" value="F:magnesium ion binding"/>
    <property type="evidence" value="ECO:0007669"/>
    <property type="project" value="UniProtKB-UniRule"/>
</dbReference>
<dbReference type="GO" id="GO:0008966">
    <property type="term" value="F:phosphoglucosamine mutase activity"/>
    <property type="evidence" value="ECO:0000318"/>
    <property type="project" value="GO_Central"/>
</dbReference>
<dbReference type="GO" id="GO:0004615">
    <property type="term" value="F:phosphomannomutase activity"/>
    <property type="evidence" value="ECO:0000318"/>
    <property type="project" value="GO_Central"/>
</dbReference>
<dbReference type="GO" id="GO:0005975">
    <property type="term" value="P:carbohydrate metabolic process"/>
    <property type="evidence" value="ECO:0007669"/>
    <property type="project" value="InterPro"/>
</dbReference>
<dbReference type="GO" id="GO:0009252">
    <property type="term" value="P:peptidoglycan biosynthetic process"/>
    <property type="evidence" value="ECO:0000318"/>
    <property type="project" value="GO_Central"/>
</dbReference>
<dbReference type="GO" id="GO:0006048">
    <property type="term" value="P:UDP-N-acetylglucosamine biosynthetic process"/>
    <property type="evidence" value="ECO:0000318"/>
    <property type="project" value="GO_Central"/>
</dbReference>
<dbReference type="CDD" id="cd05802">
    <property type="entry name" value="GlmM"/>
    <property type="match status" value="1"/>
</dbReference>
<dbReference type="FunFam" id="3.30.310.50:FF:000001">
    <property type="entry name" value="Phosphoglucosamine mutase"/>
    <property type="match status" value="1"/>
</dbReference>
<dbReference type="FunFam" id="3.40.120.10:FF:000001">
    <property type="entry name" value="Phosphoglucosamine mutase"/>
    <property type="match status" value="1"/>
</dbReference>
<dbReference type="FunFam" id="3.40.120.10:FF:000003">
    <property type="entry name" value="Phosphoglucosamine mutase"/>
    <property type="match status" value="1"/>
</dbReference>
<dbReference type="Gene3D" id="3.40.120.10">
    <property type="entry name" value="Alpha-D-Glucose-1,6-Bisphosphate, subunit A, domain 3"/>
    <property type="match status" value="3"/>
</dbReference>
<dbReference type="Gene3D" id="3.30.310.50">
    <property type="entry name" value="Alpha-D-phosphohexomutase, C-terminal domain"/>
    <property type="match status" value="1"/>
</dbReference>
<dbReference type="HAMAP" id="MF_01554_B">
    <property type="entry name" value="GlmM_B"/>
    <property type="match status" value="1"/>
</dbReference>
<dbReference type="InterPro" id="IPR005844">
    <property type="entry name" value="A-D-PHexomutase_a/b/a-I"/>
</dbReference>
<dbReference type="InterPro" id="IPR016055">
    <property type="entry name" value="A-D-PHexomutase_a/b/a-I/II/III"/>
</dbReference>
<dbReference type="InterPro" id="IPR005845">
    <property type="entry name" value="A-D-PHexomutase_a/b/a-II"/>
</dbReference>
<dbReference type="InterPro" id="IPR005846">
    <property type="entry name" value="A-D-PHexomutase_a/b/a-III"/>
</dbReference>
<dbReference type="InterPro" id="IPR005843">
    <property type="entry name" value="A-D-PHexomutase_C"/>
</dbReference>
<dbReference type="InterPro" id="IPR036900">
    <property type="entry name" value="A-D-PHexomutase_C_sf"/>
</dbReference>
<dbReference type="InterPro" id="IPR016066">
    <property type="entry name" value="A-D-PHexomutase_CS"/>
</dbReference>
<dbReference type="InterPro" id="IPR005841">
    <property type="entry name" value="Alpha-D-phosphohexomutase_SF"/>
</dbReference>
<dbReference type="InterPro" id="IPR006352">
    <property type="entry name" value="GlmM_bact"/>
</dbReference>
<dbReference type="InterPro" id="IPR050060">
    <property type="entry name" value="Phosphoglucosamine_mutase"/>
</dbReference>
<dbReference type="NCBIfam" id="TIGR01455">
    <property type="entry name" value="glmM"/>
    <property type="match status" value="1"/>
</dbReference>
<dbReference type="NCBIfam" id="NF008139">
    <property type="entry name" value="PRK10887.1"/>
    <property type="match status" value="1"/>
</dbReference>
<dbReference type="PANTHER" id="PTHR42946:SF1">
    <property type="entry name" value="PHOSPHOGLUCOMUTASE (ALPHA-D-GLUCOSE-1,6-BISPHOSPHATE-DEPENDENT)"/>
    <property type="match status" value="1"/>
</dbReference>
<dbReference type="PANTHER" id="PTHR42946">
    <property type="entry name" value="PHOSPHOHEXOSE MUTASE"/>
    <property type="match status" value="1"/>
</dbReference>
<dbReference type="Pfam" id="PF02878">
    <property type="entry name" value="PGM_PMM_I"/>
    <property type="match status" value="1"/>
</dbReference>
<dbReference type="Pfam" id="PF02879">
    <property type="entry name" value="PGM_PMM_II"/>
    <property type="match status" value="1"/>
</dbReference>
<dbReference type="Pfam" id="PF02880">
    <property type="entry name" value="PGM_PMM_III"/>
    <property type="match status" value="1"/>
</dbReference>
<dbReference type="Pfam" id="PF00408">
    <property type="entry name" value="PGM_PMM_IV"/>
    <property type="match status" value="1"/>
</dbReference>
<dbReference type="PRINTS" id="PR00509">
    <property type="entry name" value="PGMPMM"/>
</dbReference>
<dbReference type="SUPFAM" id="SSF55957">
    <property type="entry name" value="Phosphoglucomutase, C-terminal domain"/>
    <property type="match status" value="1"/>
</dbReference>
<dbReference type="SUPFAM" id="SSF53738">
    <property type="entry name" value="Phosphoglucomutase, first 3 domains"/>
    <property type="match status" value="3"/>
</dbReference>
<dbReference type="PROSITE" id="PS00710">
    <property type="entry name" value="PGM_PMM"/>
    <property type="match status" value="1"/>
</dbReference>